<sequence length="555" mass="60911">MILAGRAPSNTSTLMKFYSLLLYSLLFSFPFLYHPLPLPSYLHHTINLTHSLPAASNPSLANNCWLCISLSSSAYIAVPTLQTDRATSPVSLHLRTSFNSPHLYPPEELIYFLDRSSKTSPDISHQPAAALLHIYLKNLSPYINSTPPIFGPLTTQTTIPVAAPLCISRQRPTGIPLGNISPSRCSFTLHLQSPTTHVTETIGVFQLHIIDKPSINTDKLKNVSSNYCLGRHLPYISLHPWLPSPCSSDSPPRPSSCLLTPSPQNNSERLLVDTQRFLIHHENRTSSSMQLAHQSPLQPLTAAALAGSLGVWVQDTPFSTPSHPFSLHLQFCLTQGLFFLCGSSTYMCLPANWTGTCTLVFLTPKIQFANGTKELPVPLMTLTPQKRVIPLIPLMVGLGLSASTIALSTGIAGISTSVTTFRSPSNDFSASITDISQTLSVLQAQVDSLAAVVLQNRRGLGLSILLNEECCFYLNQSGLVYENIKKLKDRAQKLANQASNYAESPWALSNWMSWVLPILSPLIPIFLLLLFGPCIFHLVSQFIQNRIQAITNHSI</sequence>
<protein>
    <recommendedName>
        <fullName>HERV-H_2q24.1 provirus ancestral Env polyprotein</fullName>
    </recommendedName>
    <alternativeName>
        <fullName>Env protein HERV-H/p59</fullName>
    </alternativeName>
    <alternativeName>
        <fullName>Envelope polyprotein</fullName>
    </alternativeName>
    <alternativeName>
        <fullName>HERV-H/env59</fullName>
    </alternativeName>
    <component>
        <recommendedName>
            <fullName>Surface protein</fullName>
            <shortName>SU</shortName>
        </recommendedName>
    </component>
    <component>
        <recommendedName>
            <fullName>Transmembrane protein</fullName>
            <shortName>TM</shortName>
        </recommendedName>
    </component>
</protein>
<name>ENH3_HUMAN</name>
<reference key="1">
    <citation type="journal article" date="2001" name="Virology">
        <title>Characterization of the three HERV-H proviruses with an open envelope reading frame encompassing the immunosuppressive domain and evolutionary history in primates.</title>
        <authorList>
            <person name="de Parseval N."/>
            <person name="Casella J.-F."/>
            <person name="Gressin L."/>
            <person name="Heidmann T."/>
        </authorList>
    </citation>
    <scope>NUCLEOTIDE SEQUENCE [GENOMIC DNA]</scope>
</reference>
<reference key="2">
    <citation type="journal article" date="2003" name="Proc. Natl. Acad. Sci. U.S.A.">
        <title>Genomewide screening for fusogenic human endogenous retrovirus envelopes identifies syncytin 2, a gene conserved on primate evolution.</title>
        <authorList>
            <person name="Blaise S."/>
            <person name="de Parseval N."/>
            <person name="Benit L."/>
            <person name="Heidmann T."/>
        </authorList>
    </citation>
    <scope>FUNCTION</scope>
</reference>
<reference key="3">
    <citation type="journal article" date="2003" name="J. Virol.">
        <title>Survey of human genes of retroviral origin: identification and transcriptome of the genes with coding capacity for complete envelope proteins.</title>
        <authorList>
            <person name="de Parseval N."/>
            <person name="Lazar V."/>
            <person name="Casella J.-F."/>
            <person name="Benit L."/>
            <person name="Heidmann T."/>
        </authorList>
    </citation>
    <scope>TISSUE SPECIFICITY</scope>
</reference>
<evidence type="ECO:0000250" key="1"/>
<evidence type="ECO:0000255" key="2"/>
<evidence type="ECO:0000269" key="3">
    <source>
    </source>
</evidence>
<evidence type="ECO:0000269" key="4">
    <source>
    </source>
</evidence>
<evidence type="ECO:0000305" key="5"/>
<accession>Q9N2J8</accession>
<proteinExistence type="evidence at transcript level"/>
<comment type="function">
    <text evidence="4">Retroviral envelope proteins mediate receptor recognition and membrane fusion during early infection. Endogenous envelope proteins may have kept, lost or modified their original function during evolution. This endogenous envelope protein has lost its original fusogenic properties.</text>
</comment>
<comment type="function">
    <text evidence="1">SU mediates receptor recognition.</text>
</comment>
<comment type="function">
    <text evidence="1">TM anchors the envelope heterodimer to the viral membrane through one transmembrane domain. The other hydrophobic domain, called fusion peptide, mediates fusion of the viral membrane with the target cell membrane (By similarity).</text>
</comment>
<comment type="subunit">
    <text evidence="1">The surface (SU) and transmembrane (TM) proteins form a heterodimer. SU and TM are attached by noncovalent interactions or by a labile interchain disulfide bond (By similarity).</text>
</comment>
<comment type="subcellular location">
    <subcellularLocation>
        <location>Virion</location>
    </subcellularLocation>
</comment>
<comment type="subcellular location">
    <molecule>Transmembrane protein</molecule>
    <subcellularLocation>
        <location evidence="5">Cell membrane</location>
        <topology evidence="5">Single-pass membrane protein</topology>
    </subcellularLocation>
</comment>
<comment type="tissue specificity">
    <text evidence="3">Low expression in testis.</text>
</comment>
<comment type="PTM">
    <text evidence="1">Specific enzymatic cleavages in vivo yield the mature SU and TM proteins.</text>
</comment>
<comment type="miscellaneous">
    <text>Orthologs in P.troglodytes, G.gorilla (truncated) and P.pygmaeus (truncated).</text>
</comment>
<comment type="miscellaneous">
    <text>HERV-H family subgenomic RNAs have been observed.</text>
</comment>
<comment type="miscellaneous">
    <text>This provirus is intergenic, the closest flanking genes being KCNJ3 and NR4A2.</text>
</comment>
<comment type="similarity">
    <text evidence="5">Belongs to the gamma type-C retroviral envelope protein family. HERV class-I H env subfamily.</text>
</comment>
<comment type="caution">
    <text evidence="5">Lacks the CX6CC and the CKS-17 domains.</text>
</comment>
<dbReference type="EMBL" id="AJ289711">
    <property type="protein sequence ID" value="CAB94194.1"/>
    <property type="molecule type" value="Genomic_DNA"/>
</dbReference>
<dbReference type="SMR" id="Q9N2J8"/>
<dbReference type="GlyGen" id="Q9N2J8">
    <property type="glycosylation" value="8 sites"/>
</dbReference>
<dbReference type="BioMuta" id="-"/>
<dbReference type="MassIVE" id="Q9N2J8"/>
<dbReference type="TopDownProteomics" id="Q9N2J8"/>
<dbReference type="neXtProt" id="NX_Q9N2J8"/>
<dbReference type="InParanoid" id="Q9N2J8"/>
<dbReference type="PAN-GO" id="Q9N2J8">
    <property type="GO annotations" value="0 GO annotations based on evolutionary models"/>
</dbReference>
<dbReference type="PhylomeDB" id="Q9N2J8"/>
<dbReference type="Pharos" id="Q9N2J8">
    <property type="development level" value="Tdark"/>
</dbReference>
<dbReference type="Proteomes" id="UP000005640">
    <property type="component" value="Unplaced"/>
</dbReference>
<dbReference type="RNAct" id="Q9N2J8">
    <property type="molecule type" value="protein"/>
</dbReference>
<dbReference type="GO" id="GO:0005886">
    <property type="term" value="C:plasma membrane"/>
    <property type="evidence" value="ECO:0007669"/>
    <property type="project" value="UniProtKB-SubCell"/>
</dbReference>
<dbReference type="CDD" id="cd09851">
    <property type="entry name" value="HTLV-1-like_HR1-HR2"/>
    <property type="match status" value="1"/>
</dbReference>
<dbReference type="Gene3D" id="1.10.287.210">
    <property type="match status" value="1"/>
</dbReference>
<dbReference type="InterPro" id="IPR018154">
    <property type="entry name" value="TLV/ENV_coat_polyprotein"/>
</dbReference>
<dbReference type="PANTHER" id="PTHR10424:SF60">
    <property type="entry name" value="HERV-H_2Q24.1 PROVIRUS ANCESTRAL ENV POLYPROTEIN-RELATED"/>
    <property type="match status" value="1"/>
</dbReference>
<dbReference type="PANTHER" id="PTHR10424">
    <property type="entry name" value="VIRAL ENVELOPE PROTEIN"/>
    <property type="match status" value="1"/>
</dbReference>
<dbReference type="Pfam" id="PF00429">
    <property type="entry name" value="TLV_coat"/>
    <property type="match status" value="1"/>
</dbReference>
<dbReference type="SUPFAM" id="SSF58069">
    <property type="entry name" value="Virus ectodomain"/>
    <property type="match status" value="1"/>
</dbReference>
<feature type="signal peptide" evidence="2">
    <location>
        <begin position="1"/>
        <end position="35"/>
    </location>
</feature>
<feature type="chain" id="PRO_0000008470" description="HERV-H_2q24.1 provirus ancestral Env polyprotein">
    <location>
        <begin position="36"/>
        <end position="555"/>
    </location>
</feature>
<feature type="chain" id="PRO_0000008471" description="Surface protein" evidence="1">
    <location>
        <begin position="36"/>
        <end position="387"/>
    </location>
</feature>
<feature type="chain" id="PRO_0000008472" description="Transmembrane protein" evidence="1">
    <location>
        <begin position="388"/>
        <end position="555"/>
    </location>
</feature>
<feature type="topological domain" description="Extracellular" evidence="2">
    <location>
        <begin position="36"/>
        <end position="515"/>
    </location>
</feature>
<feature type="transmembrane region" description="Helical" evidence="2">
    <location>
        <begin position="516"/>
        <end position="536"/>
    </location>
</feature>
<feature type="topological domain" description="Cytoplasmic" evidence="2">
    <location>
        <begin position="537"/>
        <end position="555"/>
    </location>
</feature>
<feature type="region of interest" description="Fusion peptide" evidence="1">
    <location>
        <begin position="388"/>
        <end position="408"/>
    </location>
</feature>
<feature type="short sequence motif" description="CXXC" evidence="1">
    <location>
        <begin position="64"/>
        <end position="67"/>
    </location>
</feature>
<feature type="site" description="Cleavage" evidence="1">
    <location>
        <begin position="387"/>
        <end position="388"/>
    </location>
</feature>
<feature type="glycosylation site" description="N-linked (GlcNAc...) asparagine" evidence="2">
    <location>
        <position position="47"/>
    </location>
</feature>
<feature type="glycosylation site" description="N-linked (GlcNAc...) asparagine" evidence="2">
    <location>
        <position position="222"/>
    </location>
</feature>
<feature type="glycosylation site" description="N-linked (GlcNAc...) asparagine" evidence="2">
    <location>
        <position position="265"/>
    </location>
</feature>
<feature type="glycosylation site" description="N-linked (GlcNAc...) asparagine" evidence="2">
    <location>
        <position position="283"/>
    </location>
</feature>
<feature type="glycosylation site" description="N-linked (GlcNAc...) asparagine" evidence="2">
    <location>
        <position position="352"/>
    </location>
</feature>
<feature type="glycosylation site" description="N-linked (GlcNAc...) asparagine" evidence="2">
    <location>
        <position position="370"/>
    </location>
</feature>
<feature type="glycosylation site" description="N-linked (GlcNAc...) asparagine" evidence="2">
    <location>
        <position position="475"/>
    </location>
</feature>
<organism>
    <name type="scientific">Homo sapiens</name>
    <name type="common">Human</name>
    <dbReference type="NCBI Taxonomy" id="9606"/>
    <lineage>
        <taxon>Eukaryota</taxon>
        <taxon>Metazoa</taxon>
        <taxon>Chordata</taxon>
        <taxon>Craniata</taxon>
        <taxon>Vertebrata</taxon>
        <taxon>Euteleostomi</taxon>
        <taxon>Mammalia</taxon>
        <taxon>Eutheria</taxon>
        <taxon>Euarchontoglires</taxon>
        <taxon>Primates</taxon>
        <taxon>Haplorrhini</taxon>
        <taxon>Catarrhini</taxon>
        <taxon>Hominidae</taxon>
        <taxon>Homo</taxon>
    </lineage>
</organism>
<keyword id="KW-1003">Cell membrane</keyword>
<keyword id="KW-0165">Cleavage on pair of basic residues</keyword>
<keyword id="KW-1015">Disulfide bond</keyword>
<keyword id="KW-0895">ERV</keyword>
<keyword id="KW-0325">Glycoprotein</keyword>
<keyword id="KW-0472">Membrane</keyword>
<keyword id="KW-1185">Reference proteome</keyword>
<keyword id="KW-0732">Signal</keyword>
<keyword id="KW-0812">Transmembrane</keyword>
<keyword id="KW-1133">Transmembrane helix</keyword>
<keyword id="KW-0814">Transposable element</keyword>
<keyword id="KW-0261">Viral envelope protein</keyword>
<keyword id="KW-0946">Virion</keyword>